<name>GLYA_HALMA</name>
<gene>
    <name evidence="1" type="primary">glyA</name>
    <name type="ordered locus">rrnAC0999</name>
</gene>
<accession>Q5V3D7</accession>
<dbReference type="EC" id="2.1.2.1" evidence="1"/>
<dbReference type="EMBL" id="AY596297">
    <property type="protein sequence ID" value="AAV45965.1"/>
    <property type="molecule type" value="Genomic_DNA"/>
</dbReference>
<dbReference type="RefSeq" id="WP_004961161.1">
    <property type="nucleotide sequence ID" value="NZ_CP039138.1"/>
</dbReference>
<dbReference type="SMR" id="Q5V3D7"/>
<dbReference type="STRING" id="272569.rrnAC0999"/>
<dbReference type="PaxDb" id="272569-rrnAC0999"/>
<dbReference type="EnsemblBacteria" id="AAV45965">
    <property type="protein sequence ID" value="AAV45965"/>
    <property type="gene ID" value="rrnAC0999"/>
</dbReference>
<dbReference type="GeneID" id="64822355"/>
<dbReference type="KEGG" id="hma:rrnAC0999"/>
<dbReference type="PATRIC" id="fig|272569.17.peg.1727"/>
<dbReference type="eggNOG" id="arCOG00070">
    <property type="taxonomic scope" value="Archaea"/>
</dbReference>
<dbReference type="HOGENOM" id="CLU_022477_2_1_2"/>
<dbReference type="UniPathway" id="UPA00193"/>
<dbReference type="UniPathway" id="UPA00288">
    <property type="reaction ID" value="UER01023"/>
</dbReference>
<dbReference type="Proteomes" id="UP000001169">
    <property type="component" value="Chromosome I"/>
</dbReference>
<dbReference type="GO" id="GO:0005737">
    <property type="term" value="C:cytoplasm"/>
    <property type="evidence" value="ECO:0007669"/>
    <property type="project" value="UniProtKB-SubCell"/>
</dbReference>
<dbReference type="GO" id="GO:0004372">
    <property type="term" value="F:glycine hydroxymethyltransferase activity"/>
    <property type="evidence" value="ECO:0007669"/>
    <property type="project" value="UniProtKB-UniRule"/>
</dbReference>
<dbReference type="GO" id="GO:0030170">
    <property type="term" value="F:pyridoxal phosphate binding"/>
    <property type="evidence" value="ECO:0007669"/>
    <property type="project" value="UniProtKB-UniRule"/>
</dbReference>
<dbReference type="GO" id="GO:0019264">
    <property type="term" value="P:glycine biosynthetic process from serine"/>
    <property type="evidence" value="ECO:0007669"/>
    <property type="project" value="UniProtKB-UniRule"/>
</dbReference>
<dbReference type="GO" id="GO:0035999">
    <property type="term" value="P:tetrahydrofolate interconversion"/>
    <property type="evidence" value="ECO:0007669"/>
    <property type="project" value="UniProtKB-UniRule"/>
</dbReference>
<dbReference type="CDD" id="cd00378">
    <property type="entry name" value="SHMT"/>
    <property type="match status" value="1"/>
</dbReference>
<dbReference type="FunFam" id="3.40.640.10:FF:000001">
    <property type="entry name" value="Serine hydroxymethyltransferase"/>
    <property type="match status" value="1"/>
</dbReference>
<dbReference type="Gene3D" id="3.90.1150.10">
    <property type="entry name" value="Aspartate Aminotransferase, domain 1"/>
    <property type="match status" value="1"/>
</dbReference>
<dbReference type="Gene3D" id="3.40.640.10">
    <property type="entry name" value="Type I PLP-dependent aspartate aminotransferase-like (Major domain)"/>
    <property type="match status" value="1"/>
</dbReference>
<dbReference type="HAMAP" id="MF_00051">
    <property type="entry name" value="SHMT"/>
    <property type="match status" value="1"/>
</dbReference>
<dbReference type="InterPro" id="IPR015424">
    <property type="entry name" value="PyrdxlP-dep_Trfase"/>
</dbReference>
<dbReference type="InterPro" id="IPR015421">
    <property type="entry name" value="PyrdxlP-dep_Trfase_major"/>
</dbReference>
<dbReference type="InterPro" id="IPR015422">
    <property type="entry name" value="PyrdxlP-dep_Trfase_small"/>
</dbReference>
<dbReference type="InterPro" id="IPR001085">
    <property type="entry name" value="Ser_HO-MeTrfase"/>
</dbReference>
<dbReference type="InterPro" id="IPR049943">
    <property type="entry name" value="Ser_HO-MeTrfase-like"/>
</dbReference>
<dbReference type="InterPro" id="IPR019798">
    <property type="entry name" value="Ser_HO-MeTrfase_PLP_BS"/>
</dbReference>
<dbReference type="InterPro" id="IPR039429">
    <property type="entry name" value="SHMT-like_dom"/>
</dbReference>
<dbReference type="NCBIfam" id="NF000586">
    <property type="entry name" value="PRK00011.1"/>
    <property type="match status" value="1"/>
</dbReference>
<dbReference type="PANTHER" id="PTHR11680">
    <property type="entry name" value="SERINE HYDROXYMETHYLTRANSFERASE"/>
    <property type="match status" value="1"/>
</dbReference>
<dbReference type="PANTHER" id="PTHR11680:SF35">
    <property type="entry name" value="SERINE HYDROXYMETHYLTRANSFERASE 1"/>
    <property type="match status" value="1"/>
</dbReference>
<dbReference type="Pfam" id="PF00464">
    <property type="entry name" value="SHMT"/>
    <property type="match status" value="1"/>
</dbReference>
<dbReference type="PIRSF" id="PIRSF000412">
    <property type="entry name" value="SHMT"/>
    <property type="match status" value="1"/>
</dbReference>
<dbReference type="SUPFAM" id="SSF53383">
    <property type="entry name" value="PLP-dependent transferases"/>
    <property type="match status" value="1"/>
</dbReference>
<dbReference type="PROSITE" id="PS00096">
    <property type="entry name" value="SHMT"/>
    <property type="match status" value="1"/>
</dbReference>
<comment type="function">
    <text evidence="1">Catalyzes the reversible interconversion of serine and glycine with tetrahydrofolate (THF) serving as the one-carbon carrier. Also exhibits THF-independent aldolase activity toward beta-hydroxyamino acids, producing glycine and aldehydes, via a retro-aldol mechanism.</text>
</comment>
<comment type="catalytic activity">
    <reaction evidence="1">
        <text>(6R)-5,10-methylene-5,6,7,8-tetrahydrofolate + glycine + H2O = (6S)-5,6,7,8-tetrahydrofolate + L-serine</text>
        <dbReference type="Rhea" id="RHEA:15481"/>
        <dbReference type="ChEBI" id="CHEBI:15377"/>
        <dbReference type="ChEBI" id="CHEBI:15636"/>
        <dbReference type="ChEBI" id="CHEBI:33384"/>
        <dbReference type="ChEBI" id="CHEBI:57305"/>
        <dbReference type="ChEBI" id="CHEBI:57453"/>
        <dbReference type="EC" id="2.1.2.1"/>
    </reaction>
</comment>
<comment type="cofactor">
    <cofactor evidence="1">
        <name>pyridoxal 5'-phosphate</name>
        <dbReference type="ChEBI" id="CHEBI:597326"/>
    </cofactor>
</comment>
<comment type="pathway">
    <text evidence="1">One-carbon metabolism; tetrahydrofolate interconversion.</text>
</comment>
<comment type="pathway">
    <text evidence="1">Amino-acid biosynthesis; glycine biosynthesis; glycine from L-serine: step 1/1.</text>
</comment>
<comment type="subunit">
    <text evidence="1">Homodimer.</text>
</comment>
<comment type="subcellular location">
    <subcellularLocation>
        <location evidence="1">Cytoplasm</location>
    </subcellularLocation>
</comment>
<comment type="similarity">
    <text evidence="1">Belongs to the SHMT family.</text>
</comment>
<sequence>MSYETVREADPAVADALEGERGRQNDTLAMIASENHVSEAVMEAQSSELTNKYAEGYPGERYYGGCEYADDVEELAIDRAKELWGADHVNVQPHSGSQANMGVYLGVLEPGDKILSLDLTHGGHLSHGHPANFAGQVYEVEQYKVDEETGYVDYEGLHDHAEEFEPDIIVSGYSAYPREVDFERIQEAADAVDAYHLADIAHITGLVAAGVHESPVGVADFVTGSTHKTIRAGRGGIIMCDEEYADDIDAAVFPGSQGGPLMHNVAGKAVGFGEALAPEFEQYAQQTVDNAIALGEQFKEHGLSLVSGGTDNHLVLIDLRPSHPDTTGKEVEEALEEAGIVLNANTVPGETRSAFNPSGIRAGTPALTTRGFDEDACREVADLIYKVVDAPHDDDVVAEVSDRVDEMTDEYTLYE</sequence>
<protein>
    <recommendedName>
        <fullName evidence="1">Serine hydroxymethyltransferase</fullName>
        <shortName evidence="1">SHMT</shortName>
        <shortName evidence="1">Serine methylase</shortName>
        <ecNumber evidence="1">2.1.2.1</ecNumber>
    </recommendedName>
</protein>
<organism>
    <name type="scientific">Haloarcula marismortui (strain ATCC 43049 / DSM 3752 / JCM 8966 / VKM B-1809)</name>
    <name type="common">Halobacterium marismortui</name>
    <dbReference type="NCBI Taxonomy" id="272569"/>
    <lineage>
        <taxon>Archaea</taxon>
        <taxon>Methanobacteriati</taxon>
        <taxon>Methanobacteriota</taxon>
        <taxon>Stenosarchaea group</taxon>
        <taxon>Halobacteria</taxon>
        <taxon>Halobacteriales</taxon>
        <taxon>Haloarculaceae</taxon>
        <taxon>Haloarcula</taxon>
    </lineage>
</organism>
<evidence type="ECO:0000255" key="1">
    <source>
        <dbReference type="HAMAP-Rule" id="MF_00051"/>
    </source>
</evidence>
<feature type="chain" id="PRO_0000113710" description="Serine hydroxymethyltransferase">
    <location>
        <begin position="1"/>
        <end position="415"/>
    </location>
</feature>
<feature type="binding site" evidence="1">
    <location>
        <position position="119"/>
    </location>
    <ligand>
        <name>(6S)-5,6,7,8-tetrahydrofolate</name>
        <dbReference type="ChEBI" id="CHEBI:57453"/>
    </ligand>
</feature>
<feature type="binding site" evidence="1">
    <location>
        <begin position="123"/>
        <end position="125"/>
    </location>
    <ligand>
        <name>(6S)-5,6,7,8-tetrahydrofolate</name>
        <dbReference type="ChEBI" id="CHEBI:57453"/>
    </ligand>
</feature>
<feature type="binding site" evidence="1">
    <location>
        <begin position="353"/>
        <end position="355"/>
    </location>
    <ligand>
        <name>(6S)-5,6,7,8-tetrahydrofolate</name>
        <dbReference type="ChEBI" id="CHEBI:57453"/>
    </ligand>
</feature>
<feature type="site" description="Plays an important role in substrate specificity" evidence="1">
    <location>
        <position position="227"/>
    </location>
</feature>
<feature type="modified residue" description="N6-(pyridoxal phosphate)lysine" evidence="1">
    <location>
        <position position="228"/>
    </location>
</feature>
<proteinExistence type="inferred from homology"/>
<keyword id="KW-0028">Amino-acid biosynthesis</keyword>
<keyword id="KW-0963">Cytoplasm</keyword>
<keyword id="KW-0554">One-carbon metabolism</keyword>
<keyword id="KW-0663">Pyridoxal phosphate</keyword>
<keyword id="KW-1185">Reference proteome</keyword>
<keyword id="KW-0808">Transferase</keyword>
<reference key="1">
    <citation type="journal article" date="2004" name="Genome Res.">
        <title>Genome sequence of Haloarcula marismortui: a halophilic archaeon from the Dead Sea.</title>
        <authorList>
            <person name="Baliga N.S."/>
            <person name="Bonneau R."/>
            <person name="Facciotti M.T."/>
            <person name="Pan M."/>
            <person name="Glusman G."/>
            <person name="Deutsch E.W."/>
            <person name="Shannon P."/>
            <person name="Chiu Y."/>
            <person name="Weng R.S."/>
            <person name="Gan R.R."/>
            <person name="Hung P."/>
            <person name="Date S.V."/>
            <person name="Marcotte E."/>
            <person name="Hood L."/>
            <person name="Ng W.V."/>
        </authorList>
    </citation>
    <scope>NUCLEOTIDE SEQUENCE [LARGE SCALE GENOMIC DNA]</scope>
    <source>
        <strain>ATCC 43049 / DSM 3752 / JCM 8966 / VKM B-1809</strain>
    </source>
</reference>